<name>MUTL_CHLPN</name>
<feature type="chain" id="PRO_0000177937" description="DNA mismatch repair protein MutL">
    <location>
        <begin position="1"/>
        <end position="580"/>
    </location>
</feature>
<reference key="1">
    <citation type="journal article" date="1999" name="Nat. Genet.">
        <title>Comparative genomes of Chlamydia pneumoniae and C. trachomatis.</title>
        <authorList>
            <person name="Kalman S."/>
            <person name="Mitchell W.P."/>
            <person name="Marathe R."/>
            <person name="Lammel C.J."/>
            <person name="Fan J."/>
            <person name="Hyman R.W."/>
            <person name="Olinger L."/>
            <person name="Grimwood J."/>
            <person name="Davis R.W."/>
            <person name="Stephens R.S."/>
        </authorList>
    </citation>
    <scope>NUCLEOTIDE SEQUENCE [LARGE SCALE GENOMIC DNA]</scope>
    <source>
        <strain>CWL029</strain>
    </source>
</reference>
<reference key="2">
    <citation type="journal article" date="2000" name="Nucleic Acids Res.">
        <title>Genome sequences of Chlamydia trachomatis MoPn and Chlamydia pneumoniae AR39.</title>
        <authorList>
            <person name="Read T.D."/>
            <person name="Brunham R.C."/>
            <person name="Shen C."/>
            <person name="Gill S.R."/>
            <person name="Heidelberg J.F."/>
            <person name="White O."/>
            <person name="Hickey E.K."/>
            <person name="Peterson J.D."/>
            <person name="Utterback T.R."/>
            <person name="Berry K.J."/>
            <person name="Bass S."/>
            <person name="Linher K.D."/>
            <person name="Weidman J.F."/>
            <person name="Khouri H.M."/>
            <person name="Craven B."/>
            <person name="Bowman C."/>
            <person name="Dodson R.J."/>
            <person name="Gwinn M.L."/>
            <person name="Nelson W.C."/>
            <person name="DeBoy R.T."/>
            <person name="Kolonay J.F."/>
            <person name="McClarty G."/>
            <person name="Salzberg S.L."/>
            <person name="Eisen J.A."/>
            <person name="Fraser C.M."/>
        </authorList>
    </citation>
    <scope>NUCLEOTIDE SEQUENCE [LARGE SCALE GENOMIC DNA]</scope>
    <source>
        <strain>AR39</strain>
    </source>
</reference>
<reference key="3">
    <citation type="journal article" date="2000" name="Nucleic Acids Res.">
        <title>Comparison of whole genome sequences of Chlamydia pneumoniae J138 from Japan and CWL029 from USA.</title>
        <authorList>
            <person name="Shirai M."/>
            <person name="Hirakawa H."/>
            <person name="Kimoto M."/>
            <person name="Tabuchi M."/>
            <person name="Kishi F."/>
            <person name="Ouchi K."/>
            <person name="Shiba T."/>
            <person name="Ishii K."/>
            <person name="Hattori M."/>
            <person name="Kuhara S."/>
            <person name="Nakazawa T."/>
        </authorList>
    </citation>
    <scope>NUCLEOTIDE SEQUENCE [LARGE SCALE GENOMIC DNA]</scope>
    <source>
        <strain>J138</strain>
    </source>
</reference>
<reference key="4">
    <citation type="submission" date="2002-05" db="EMBL/GenBank/DDBJ databases">
        <title>The genome sequence of Chlamydia pneumoniae TW183 and comparison with other Chlamydia strains based on whole genome sequence analysis.</title>
        <authorList>
            <person name="Geng M.M."/>
            <person name="Schuhmacher A."/>
            <person name="Muehldorfer I."/>
            <person name="Bensch K.W."/>
            <person name="Schaefer K.P."/>
            <person name="Schneider S."/>
            <person name="Pohl T."/>
            <person name="Essig A."/>
            <person name="Marre R."/>
            <person name="Melchers K."/>
        </authorList>
    </citation>
    <scope>NUCLEOTIDE SEQUENCE [LARGE SCALE GENOMIC DNA]</scope>
    <source>
        <strain>TW-183</strain>
    </source>
</reference>
<accession>Q9Z794</accession>
<accession>Q9JQ29</accession>
<comment type="function">
    <text evidence="1">This protein is involved in the repair of mismatches in DNA. It is required for dam-dependent methyl-directed DNA mismatch repair. May act as a 'molecular matchmaker', a protein that promotes the formation of a stable complex between two or more DNA-binding proteins in an ATP-dependent manner without itself being part of a final effector complex (By similarity).</text>
</comment>
<comment type="similarity">
    <text evidence="2">Belongs to the DNA mismatch repair MutL/HexB family.</text>
</comment>
<dbReference type="EMBL" id="AE001363">
    <property type="protein sequence ID" value="AAD18950.1"/>
    <property type="molecule type" value="Genomic_DNA"/>
</dbReference>
<dbReference type="EMBL" id="AE002161">
    <property type="protein sequence ID" value="AAF38832.1"/>
    <property type="molecule type" value="Genomic_DNA"/>
</dbReference>
<dbReference type="EMBL" id="BA000008">
    <property type="protein sequence ID" value="BAA99020.1"/>
    <property type="molecule type" value="Genomic_DNA"/>
</dbReference>
<dbReference type="EMBL" id="AE009440">
    <property type="protein sequence ID" value="AAP98770.1"/>
    <property type="molecule type" value="Genomic_DNA"/>
</dbReference>
<dbReference type="PIR" id="A72032">
    <property type="entry name" value="A72032"/>
</dbReference>
<dbReference type="PIR" id="B86592">
    <property type="entry name" value="B86592"/>
</dbReference>
<dbReference type="RefSeq" id="NP_225007.1">
    <property type="nucleotide sequence ID" value="NC_000922.1"/>
</dbReference>
<dbReference type="RefSeq" id="WP_010883449.1">
    <property type="nucleotide sequence ID" value="NZ_LN847257.1"/>
</dbReference>
<dbReference type="SMR" id="Q9Z794"/>
<dbReference type="STRING" id="406984.CPK_ORF00220"/>
<dbReference type="GeneID" id="45050867"/>
<dbReference type="KEGG" id="cpa:CP_1059"/>
<dbReference type="KEGG" id="cpj:mutL"/>
<dbReference type="KEGG" id="cpn:CPn_0812"/>
<dbReference type="KEGG" id="cpt:CpB0841"/>
<dbReference type="PATRIC" id="fig|115713.3.peg.891"/>
<dbReference type="eggNOG" id="COG0323">
    <property type="taxonomic scope" value="Bacteria"/>
</dbReference>
<dbReference type="HOGENOM" id="CLU_004131_4_3_0"/>
<dbReference type="OrthoDB" id="9763467at2"/>
<dbReference type="Proteomes" id="UP000000583">
    <property type="component" value="Chromosome"/>
</dbReference>
<dbReference type="Proteomes" id="UP000000801">
    <property type="component" value="Chromosome"/>
</dbReference>
<dbReference type="GO" id="GO:0032300">
    <property type="term" value="C:mismatch repair complex"/>
    <property type="evidence" value="ECO:0007669"/>
    <property type="project" value="InterPro"/>
</dbReference>
<dbReference type="GO" id="GO:0005524">
    <property type="term" value="F:ATP binding"/>
    <property type="evidence" value="ECO:0007669"/>
    <property type="project" value="InterPro"/>
</dbReference>
<dbReference type="GO" id="GO:0016887">
    <property type="term" value="F:ATP hydrolysis activity"/>
    <property type="evidence" value="ECO:0007669"/>
    <property type="project" value="InterPro"/>
</dbReference>
<dbReference type="GO" id="GO:0140664">
    <property type="term" value="F:ATP-dependent DNA damage sensor activity"/>
    <property type="evidence" value="ECO:0007669"/>
    <property type="project" value="InterPro"/>
</dbReference>
<dbReference type="GO" id="GO:0030983">
    <property type="term" value="F:mismatched DNA binding"/>
    <property type="evidence" value="ECO:0007669"/>
    <property type="project" value="InterPro"/>
</dbReference>
<dbReference type="GO" id="GO:0006298">
    <property type="term" value="P:mismatch repair"/>
    <property type="evidence" value="ECO:0007669"/>
    <property type="project" value="UniProtKB-UniRule"/>
</dbReference>
<dbReference type="CDD" id="cd16926">
    <property type="entry name" value="HATPase_MutL-MLH-PMS-like"/>
    <property type="match status" value="1"/>
</dbReference>
<dbReference type="CDD" id="cd00782">
    <property type="entry name" value="MutL_Trans"/>
    <property type="match status" value="1"/>
</dbReference>
<dbReference type="FunFam" id="3.30.565.10:FF:000003">
    <property type="entry name" value="DNA mismatch repair endonuclease MutL"/>
    <property type="match status" value="1"/>
</dbReference>
<dbReference type="Gene3D" id="3.30.230.10">
    <property type="match status" value="1"/>
</dbReference>
<dbReference type="Gene3D" id="3.30.565.10">
    <property type="entry name" value="Histidine kinase-like ATPase, C-terminal domain"/>
    <property type="match status" value="1"/>
</dbReference>
<dbReference type="Gene3D" id="3.30.1370.100">
    <property type="entry name" value="MutL, C-terminal domain, regulatory subdomain"/>
    <property type="match status" value="1"/>
</dbReference>
<dbReference type="HAMAP" id="MF_00149">
    <property type="entry name" value="DNA_mis_repair"/>
    <property type="match status" value="1"/>
</dbReference>
<dbReference type="InterPro" id="IPR014762">
    <property type="entry name" value="DNA_mismatch_repair_CS"/>
</dbReference>
<dbReference type="InterPro" id="IPR020667">
    <property type="entry name" value="DNA_mismatch_repair_MutL"/>
</dbReference>
<dbReference type="InterPro" id="IPR013507">
    <property type="entry name" value="DNA_mismatch_S5_2-like"/>
</dbReference>
<dbReference type="InterPro" id="IPR036890">
    <property type="entry name" value="HATPase_C_sf"/>
</dbReference>
<dbReference type="InterPro" id="IPR002099">
    <property type="entry name" value="MutL/Mlh/PMS"/>
</dbReference>
<dbReference type="InterPro" id="IPR038973">
    <property type="entry name" value="MutL/Mlh/Pms-like"/>
</dbReference>
<dbReference type="InterPro" id="IPR014790">
    <property type="entry name" value="MutL_C"/>
</dbReference>
<dbReference type="InterPro" id="IPR042121">
    <property type="entry name" value="MutL_C_regsub"/>
</dbReference>
<dbReference type="InterPro" id="IPR037198">
    <property type="entry name" value="MutL_C_sf"/>
</dbReference>
<dbReference type="InterPro" id="IPR020568">
    <property type="entry name" value="Ribosomal_Su5_D2-typ_SF"/>
</dbReference>
<dbReference type="InterPro" id="IPR014721">
    <property type="entry name" value="Ribsml_uS5_D2-typ_fold_subgr"/>
</dbReference>
<dbReference type="NCBIfam" id="TIGR00585">
    <property type="entry name" value="mutl"/>
    <property type="match status" value="1"/>
</dbReference>
<dbReference type="NCBIfam" id="NF000954">
    <property type="entry name" value="PRK00095.2-5"/>
    <property type="match status" value="1"/>
</dbReference>
<dbReference type="PANTHER" id="PTHR10073">
    <property type="entry name" value="DNA MISMATCH REPAIR PROTEIN MLH, PMS, MUTL"/>
    <property type="match status" value="1"/>
</dbReference>
<dbReference type="PANTHER" id="PTHR10073:SF12">
    <property type="entry name" value="DNA MISMATCH REPAIR PROTEIN MLH1"/>
    <property type="match status" value="1"/>
</dbReference>
<dbReference type="Pfam" id="PF01119">
    <property type="entry name" value="DNA_mis_repair"/>
    <property type="match status" value="1"/>
</dbReference>
<dbReference type="Pfam" id="PF13589">
    <property type="entry name" value="HATPase_c_3"/>
    <property type="match status" value="1"/>
</dbReference>
<dbReference type="Pfam" id="PF08676">
    <property type="entry name" value="MutL_C"/>
    <property type="match status" value="1"/>
</dbReference>
<dbReference type="SMART" id="SM01340">
    <property type="entry name" value="DNA_mis_repair"/>
    <property type="match status" value="1"/>
</dbReference>
<dbReference type="SMART" id="SM00853">
    <property type="entry name" value="MutL_C"/>
    <property type="match status" value="1"/>
</dbReference>
<dbReference type="SUPFAM" id="SSF55874">
    <property type="entry name" value="ATPase domain of HSP90 chaperone/DNA topoisomerase II/histidine kinase"/>
    <property type="match status" value="1"/>
</dbReference>
<dbReference type="SUPFAM" id="SSF118116">
    <property type="entry name" value="DNA mismatch repair protein MutL"/>
    <property type="match status" value="1"/>
</dbReference>
<dbReference type="SUPFAM" id="SSF54211">
    <property type="entry name" value="Ribosomal protein S5 domain 2-like"/>
    <property type="match status" value="1"/>
</dbReference>
<dbReference type="PROSITE" id="PS00058">
    <property type="entry name" value="DNA_MISMATCH_REPAIR_1"/>
    <property type="match status" value="1"/>
</dbReference>
<organism>
    <name type="scientific">Chlamydia pneumoniae</name>
    <name type="common">Chlamydophila pneumoniae</name>
    <dbReference type="NCBI Taxonomy" id="83558"/>
    <lineage>
        <taxon>Bacteria</taxon>
        <taxon>Pseudomonadati</taxon>
        <taxon>Chlamydiota</taxon>
        <taxon>Chlamydiia</taxon>
        <taxon>Chlamydiales</taxon>
        <taxon>Chlamydiaceae</taxon>
        <taxon>Chlamydia/Chlamydophila group</taxon>
        <taxon>Chlamydia</taxon>
    </lineage>
</organism>
<keyword id="KW-0227">DNA damage</keyword>
<keyword id="KW-0234">DNA repair</keyword>
<evidence type="ECO:0000250" key="1"/>
<evidence type="ECO:0000305" key="2"/>
<sequence length="580" mass="65001">MSTRRPIQLLDPLTINQIAAGEVIENSVSVVKELIENSLDAGADEIEIETLGGGQGAIIIRDNGCGFRAEDIPIALQRHATSKIREFSDIFSLNSFGFRGEALPSIASISKMEIQSSIEGDEGVRTVIHGGDIVSCEPCARQLGTTVIVNSLFYNVPVRRGFQKSMQSDRLGIRKLIENRILSTANIGWSWISEGHHEIQIAKQQGFQERVAYVMGDHFMQDALTIDKEANGVRIVGVLGSPSFHRPTRQGQKIFINDRPIESLFISKKVGDAYALLLPLHRYPVFVLKLYLPSSWCDFNVHPQKIEARILKEELVGDCIKEAIVETLACPPGILCRTHQEIEESDSVPLPMFRMLETSDVQEEESVEFDQNLFAYSSEDVSLEKQEYTSRGPKSQMDWIYSSDVRFLTSLGRVVLAEDLEGVHIIFTAAARKHLFFLSLMQENSRMYQSQALLIPLRLQVTPEEAFFFSHHGRTLCDLGIEISQVGPCVFSIESTPTVIGEEELKEWLLLLAARGSTDINSEALTALMKETLTQATFSKHQHVFDVSWLKLLWSVGKPEKGFDGARIRRLILDSDFMEG</sequence>
<proteinExistence type="inferred from homology"/>
<gene>
    <name type="primary">mutL</name>
    <name type="ordered locus">CPn_0812</name>
    <name type="ordered locus">CP_1059</name>
    <name type="ordered locus">CpB0841</name>
</gene>
<protein>
    <recommendedName>
        <fullName>DNA mismatch repair protein MutL</fullName>
    </recommendedName>
</protein>